<comment type="catalytic activity">
    <reaction evidence="1">
        <text>(2R)-3-phosphoglycerate + ATP = (2R)-3-phospho-glyceroyl phosphate + ADP</text>
        <dbReference type="Rhea" id="RHEA:14801"/>
        <dbReference type="ChEBI" id="CHEBI:30616"/>
        <dbReference type="ChEBI" id="CHEBI:57604"/>
        <dbReference type="ChEBI" id="CHEBI:58272"/>
        <dbReference type="ChEBI" id="CHEBI:456216"/>
        <dbReference type="EC" id="2.7.2.3"/>
    </reaction>
</comment>
<comment type="pathway">
    <text evidence="1">Carbohydrate degradation; glycolysis; pyruvate from D-glyceraldehyde 3-phosphate: step 2/5.</text>
</comment>
<comment type="subunit">
    <text evidence="1">Monomer.</text>
</comment>
<comment type="subcellular location">
    <subcellularLocation>
        <location evidence="1">Cytoplasm</location>
    </subcellularLocation>
</comment>
<comment type="similarity">
    <text evidence="1">Belongs to the phosphoglycerate kinase family.</text>
</comment>
<proteinExistence type="inferred from homology"/>
<evidence type="ECO:0000255" key="1">
    <source>
        <dbReference type="HAMAP-Rule" id="MF_00145"/>
    </source>
</evidence>
<accession>A0PYP1</accession>
<sequence length="398" mass="42491">MKLNKKTVEDIQVKGKKVLVRCDFNVPLKDGVITDENRLVGAMPTIKYLVNEGAKVILCSHLGKPKGEAKPELSLAPVAKRLSELLEKEVVFAADDTVVGENAKKAVAEMKDGDVVLLQNTRYRKEETKNEENFSKELASLADVFVNDAFGTAHRAHCSTVGVADFLNEAACGYLIQKELKFLGDAVETPVRPFVAILGGAKVSDKINVINNLLEKVDTLIIGGGMAYTFLKAQGYTIGKSLVEEDKVEYAKEMMDKAKAKGVKLLLPVDNVVGEEFDANTTPVTTEDANIPEGYMGLDIGPKTSALYADAVRTAKTVVWNGPMGVFEFANFAKGTIAVAEAMAEADATTIIGGGDSAAAVNQLGFGDKMTHISTGGGASLEFLEGKELPGIVALSDK</sequence>
<organism>
    <name type="scientific">Clostridium novyi (strain NT)</name>
    <dbReference type="NCBI Taxonomy" id="386415"/>
    <lineage>
        <taxon>Bacteria</taxon>
        <taxon>Bacillati</taxon>
        <taxon>Bacillota</taxon>
        <taxon>Clostridia</taxon>
        <taxon>Eubacteriales</taxon>
        <taxon>Clostridiaceae</taxon>
        <taxon>Clostridium</taxon>
    </lineage>
</organism>
<name>PGK_CLONN</name>
<protein>
    <recommendedName>
        <fullName evidence="1">Phosphoglycerate kinase</fullName>
        <ecNumber evidence="1">2.7.2.3</ecNumber>
    </recommendedName>
</protein>
<gene>
    <name evidence="1" type="primary">pgk</name>
    <name type="ordered locus">NT01CX_1411</name>
</gene>
<reference key="1">
    <citation type="journal article" date="2006" name="Nat. Biotechnol.">
        <title>The genome and transcriptomes of the anti-tumor agent Clostridium novyi-NT.</title>
        <authorList>
            <person name="Bettegowda C."/>
            <person name="Huang X."/>
            <person name="Lin J."/>
            <person name="Cheong I."/>
            <person name="Kohli M."/>
            <person name="Szabo S.A."/>
            <person name="Zhang X."/>
            <person name="Diaz L.A. Jr."/>
            <person name="Velculescu V.E."/>
            <person name="Parmigiani G."/>
            <person name="Kinzler K.W."/>
            <person name="Vogelstein B."/>
            <person name="Zhou S."/>
        </authorList>
    </citation>
    <scope>NUCLEOTIDE SEQUENCE [LARGE SCALE GENOMIC DNA]</scope>
    <source>
        <strain>NT</strain>
    </source>
</reference>
<keyword id="KW-0067">ATP-binding</keyword>
<keyword id="KW-0963">Cytoplasm</keyword>
<keyword id="KW-0324">Glycolysis</keyword>
<keyword id="KW-0418">Kinase</keyword>
<keyword id="KW-0547">Nucleotide-binding</keyword>
<keyword id="KW-1185">Reference proteome</keyword>
<keyword id="KW-0808">Transferase</keyword>
<feature type="chain" id="PRO_1000009609" description="Phosphoglycerate kinase">
    <location>
        <begin position="1"/>
        <end position="398"/>
    </location>
</feature>
<feature type="binding site" evidence="1">
    <location>
        <begin position="23"/>
        <end position="25"/>
    </location>
    <ligand>
        <name>substrate</name>
    </ligand>
</feature>
<feature type="binding site" evidence="1">
    <location>
        <position position="38"/>
    </location>
    <ligand>
        <name>substrate</name>
    </ligand>
</feature>
<feature type="binding site" evidence="1">
    <location>
        <begin position="61"/>
        <end position="64"/>
    </location>
    <ligand>
        <name>substrate</name>
    </ligand>
</feature>
<feature type="binding site" evidence="1">
    <location>
        <position position="122"/>
    </location>
    <ligand>
        <name>substrate</name>
    </ligand>
</feature>
<feature type="binding site" evidence="1">
    <location>
        <position position="155"/>
    </location>
    <ligand>
        <name>substrate</name>
    </ligand>
</feature>
<feature type="binding site" evidence="1">
    <location>
        <position position="206"/>
    </location>
    <ligand>
        <name>ATP</name>
        <dbReference type="ChEBI" id="CHEBI:30616"/>
    </ligand>
</feature>
<feature type="binding site" evidence="1">
    <location>
        <position position="297"/>
    </location>
    <ligand>
        <name>ATP</name>
        <dbReference type="ChEBI" id="CHEBI:30616"/>
    </ligand>
</feature>
<feature type="binding site" evidence="1">
    <location>
        <position position="328"/>
    </location>
    <ligand>
        <name>ATP</name>
        <dbReference type="ChEBI" id="CHEBI:30616"/>
    </ligand>
</feature>
<feature type="binding site" evidence="1">
    <location>
        <begin position="354"/>
        <end position="357"/>
    </location>
    <ligand>
        <name>ATP</name>
        <dbReference type="ChEBI" id="CHEBI:30616"/>
    </ligand>
</feature>
<dbReference type="EC" id="2.7.2.3" evidence="1"/>
<dbReference type="EMBL" id="CP000382">
    <property type="protein sequence ID" value="ABK60374.1"/>
    <property type="molecule type" value="Genomic_DNA"/>
</dbReference>
<dbReference type="RefSeq" id="WP_011721501.1">
    <property type="nucleotide sequence ID" value="NC_008593.1"/>
</dbReference>
<dbReference type="SMR" id="A0PYP1"/>
<dbReference type="STRING" id="386415.NT01CX_1411"/>
<dbReference type="KEGG" id="cno:NT01CX_1411"/>
<dbReference type="eggNOG" id="COG0126">
    <property type="taxonomic scope" value="Bacteria"/>
</dbReference>
<dbReference type="HOGENOM" id="CLU_025427_0_2_9"/>
<dbReference type="UniPathway" id="UPA00109">
    <property type="reaction ID" value="UER00185"/>
</dbReference>
<dbReference type="Proteomes" id="UP000008220">
    <property type="component" value="Chromosome"/>
</dbReference>
<dbReference type="GO" id="GO:0005829">
    <property type="term" value="C:cytosol"/>
    <property type="evidence" value="ECO:0007669"/>
    <property type="project" value="TreeGrafter"/>
</dbReference>
<dbReference type="GO" id="GO:0043531">
    <property type="term" value="F:ADP binding"/>
    <property type="evidence" value="ECO:0007669"/>
    <property type="project" value="TreeGrafter"/>
</dbReference>
<dbReference type="GO" id="GO:0005524">
    <property type="term" value="F:ATP binding"/>
    <property type="evidence" value="ECO:0007669"/>
    <property type="project" value="UniProtKB-KW"/>
</dbReference>
<dbReference type="GO" id="GO:0004618">
    <property type="term" value="F:phosphoglycerate kinase activity"/>
    <property type="evidence" value="ECO:0007669"/>
    <property type="project" value="UniProtKB-UniRule"/>
</dbReference>
<dbReference type="GO" id="GO:0006094">
    <property type="term" value="P:gluconeogenesis"/>
    <property type="evidence" value="ECO:0007669"/>
    <property type="project" value="TreeGrafter"/>
</dbReference>
<dbReference type="GO" id="GO:0006096">
    <property type="term" value="P:glycolytic process"/>
    <property type="evidence" value="ECO:0007669"/>
    <property type="project" value="UniProtKB-UniRule"/>
</dbReference>
<dbReference type="CDD" id="cd00318">
    <property type="entry name" value="Phosphoglycerate_kinase"/>
    <property type="match status" value="1"/>
</dbReference>
<dbReference type="FunFam" id="3.40.50.1260:FF:000007">
    <property type="entry name" value="Phosphoglycerate kinase"/>
    <property type="match status" value="1"/>
</dbReference>
<dbReference type="FunFam" id="3.40.50.1260:FF:000008">
    <property type="entry name" value="Phosphoglycerate kinase"/>
    <property type="match status" value="1"/>
</dbReference>
<dbReference type="Gene3D" id="3.40.50.1260">
    <property type="entry name" value="Phosphoglycerate kinase, N-terminal domain"/>
    <property type="match status" value="2"/>
</dbReference>
<dbReference type="HAMAP" id="MF_00145">
    <property type="entry name" value="Phosphoglyc_kinase"/>
    <property type="match status" value="1"/>
</dbReference>
<dbReference type="InterPro" id="IPR001576">
    <property type="entry name" value="Phosphoglycerate_kinase"/>
</dbReference>
<dbReference type="InterPro" id="IPR015911">
    <property type="entry name" value="Phosphoglycerate_kinase_CS"/>
</dbReference>
<dbReference type="InterPro" id="IPR015824">
    <property type="entry name" value="Phosphoglycerate_kinase_N"/>
</dbReference>
<dbReference type="InterPro" id="IPR036043">
    <property type="entry name" value="Phosphoglycerate_kinase_sf"/>
</dbReference>
<dbReference type="PANTHER" id="PTHR11406">
    <property type="entry name" value="PHOSPHOGLYCERATE KINASE"/>
    <property type="match status" value="1"/>
</dbReference>
<dbReference type="PANTHER" id="PTHR11406:SF23">
    <property type="entry name" value="PHOSPHOGLYCERATE KINASE 1, CHLOROPLASTIC-RELATED"/>
    <property type="match status" value="1"/>
</dbReference>
<dbReference type="Pfam" id="PF00162">
    <property type="entry name" value="PGK"/>
    <property type="match status" value="1"/>
</dbReference>
<dbReference type="PIRSF" id="PIRSF000724">
    <property type="entry name" value="Pgk"/>
    <property type="match status" value="1"/>
</dbReference>
<dbReference type="PRINTS" id="PR00477">
    <property type="entry name" value="PHGLYCKINASE"/>
</dbReference>
<dbReference type="SUPFAM" id="SSF53748">
    <property type="entry name" value="Phosphoglycerate kinase"/>
    <property type="match status" value="1"/>
</dbReference>
<dbReference type="PROSITE" id="PS00111">
    <property type="entry name" value="PGLYCERATE_KINASE"/>
    <property type="match status" value="1"/>
</dbReference>